<feature type="chain" id="PRO_0000154089" description="Anthranilate synthase component 1">
    <location>
        <begin position="1"/>
        <end position="150" status="greater than"/>
    </location>
</feature>
<feature type="binding site" evidence="2">
    <location>
        <position position="40"/>
    </location>
    <ligand>
        <name>L-tryptophan</name>
        <dbReference type="ChEBI" id="CHEBI:57912"/>
    </ligand>
</feature>
<feature type="binding site" evidence="2">
    <location>
        <position position="119"/>
    </location>
    <ligand>
        <name>chorismate</name>
        <dbReference type="ChEBI" id="CHEBI:29748"/>
    </ligand>
</feature>
<feature type="non-terminal residue">
    <location>
        <position position="150"/>
    </location>
</feature>
<keyword id="KW-0028">Amino-acid biosynthesis</keyword>
<keyword id="KW-0057">Aromatic amino acid biosynthesis</keyword>
<keyword id="KW-0456">Lyase</keyword>
<keyword id="KW-0822">Tryptophan biosynthesis</keyword>
<dbReference type="EC" id="4.1.3.27"/>
<dbReference type="EMBL" id="J01557">
    <property type="status" value="NOT_ANNOTATED_CDS"/>
    <property type="molecule type" value="Genomic_DNA"/>
</dbReference>
<dbReference type="PIR" id="A01116">
    <property type="entry name" value="NNEB1C"/>
</dbReference>
<dbReference type="SMR" id="P00896"/>
<dbReference type="STRING" id="1333848.CFNIH1_18915"/>
<dbReference type="UniPathway" id="UPA00035">
    <property type="reaction ID" value="UER00040"/>
</dbReference>
<dbReference type="GO" id="GO:0004049">
    <property type="term" value="F:anthranilate synthase activity"/>
    <property type="evidence" value="ECO:0007669"/>
    <property type="project" value="UniProtKB-EC"/>
</dbReference>
<dbReference type="GO" id="GO:0000162">
    <property type="term" value="P:L-tryptophan biosynthetic process"/>
    <property type="evidence" value="ECO:0007669"/>
    <property type="project" value="UniProtKB-UniPathway"/>
</dbReference>
<dbReference type="Gene3D" id="3.60.120.10">
    <property type="entry name" value="Anthranilate synthase"/>
    <property type="match status" value="1"/>
</dbReference>
<dbReference type="InterPro" id="IPR005801">
    <property type="entry name" value="ADC_synthase"/>
</dbReference>
<dbReference type="SUPFAM" id="SSF56322">
    <property type="entry name" value="ADC synthase"/>
    <property type="match status" value="1"/>
</dbReference>
<protein>
    <recommendedName>
        <fullName>Anthranilate synthase component 1</fullName>
        <shortName>AS</shortName>
        <shortName>ASI</shortName>
        <ecNumber>4.1.3.27</ecNumber>
    </recommendedName>
</protein>
<proteinExistence type="inferred from homology"/>
<sequence length="150" mass="16187">MQTQKPTLELVACDAAYRENPTALFHQVCGARPATLLLESADIDSKDDLKSLLLVDSALRITAIGDTVTIQALSANGASLLPLLDAALPAGVENKQQPNGRHLRFPAVSPLLDEDVRLRSLSAPDAFRPLQELVNVPAQEREVMFLGGMF</sequence>
<comment type="function">
    <text evidence="1">Part of a heterotetrameric complex that catalyzes the two-step biosynthesis of anthranilate, an intermediate in the biosynthesis of L-tryptophan. In the first step, the glutamine-binding beta subunit (TrpG) of anthranilate synthase (AS) provides the glutamine amidotransferase activity which generates ammonia as a substrate that, along with chorismate, is used in the second step, catalyzed by the large alpha subunit of AS (TrpE) to produce anthranilate. In the absence of TrpG, TrpE can synthesize anthranilate directly from chorismate and high concentrations of ammonia (By similarity).</text>
</comment>
<comment type="catalytic activity">
    <reaction>
        <text>chorismate + L-glutamine = anthranilate + pyruvate + L-glutamate + H(+)</text>
        <dbReference type="Rhea" id="RHEA:21732"/>
        <dbReference type="ChEBI" id="CHEBI:15361"/>
        <dbReference type="ChEBI" id="CHEBI:15378"/>
        <dbReference type="ChEBI" id="CHEBI:16567"/>
        <dbReference type="ChEBI" id="CHEBI:29748"/>
        <dbReference type="ChEBI" id="CHEBI:29985"/>
        <dbReference type="ChEBI" id="CHEBI:58359"/>
        <dbReference type="EC" id="4.1.3.27"/>
    </reaction>
</comment>
<comment type="cofactor">
    <cofactor evidence="2">
        <name>Mg(2+)</name>
        <dbReference type="ChEBI" id="CHEBI:18420"/>
    </cofactor>
    <text evidence="2">Binds 1 Mg(2+) ion per subunit.</text>
</comment>
<comment type="activity regulation">
    <text evidence="1">Feedback inhibited by tryptophan.</text>
</comment>
<comment type="pathway">
    <text>Amino-acid biosynthesis; L-tryptophan biosynthesis; L-tryptophan from chorismate: step 1/5.</text>
</comment>
<comment type="subunit">
    <text evidence="1">Heterotetramer consisting of two non-identical subunits: a beta subunit (TrpG) and a large alpha subunit (TrpE).</text>
</comment>
<comment type="similarity">
    <text evidence="3">Belongs to the anthranilate synthase component I family.</text>
</comment>
<organism>
    <name type="scientific">Citrobacter freundii</name>
    <dbReference type="NCBI Taxonomy" id="546"/>
    <lineage>
        <taxon>Bacteria</taxon>
        <taxon>Pseudomonadati</taxon>
        <taxon>Pseudomonadota</taxon>
        <taxon>Gammaproteobacteria</taxon>
        <taxon>Enterobacterales</taxon>
        <taxon>Enterobacteriaceae</taxon>
        <taxon>Citrobacter</taxon>
        <taxon>Citrobacter freundii complex</taxon>
    </lineage>
</organism>
<evidence type="ECO:0000250" key="1"/>
<evidence type="ECO:0000250" key="2">
    <source>
        <dbReference type="UniProtKB" id="P00897"/>
    </source>
</evidence>
<evidence type="ECO:0000305" key="3"/>
<reference key="1">
    <citation type="journal article" date="1982" name="J. Bacteriol.">
        <title>Evolutionary divergence of the Citrobacter freundii tryptophan operon regulatory region: comparison with other enteric bacteria.</title>
        <authorList>
            <person name="Blumenberg M."/>
            <person name="Yanofsky C."/>
        </authorList>
    </citation>
    <scope>NUCLEOTIDE SEQUENCE [GENOMIC DNA]</scope>
</reference>
<name>TRPE_CITFR</name>
<gene>
    <name type="primary">trpE</name>
</gene>
<accession>P00896</accession>